<sequence>MSKIPVFKGSFKSWLAKNDEKPAKSVLLEPKYRDHHEKIRNKENMEEGEKPVFVSMANPQPTREDYERYDEDRRLKDKARDLRIARRRNSATPEASPSSDQYFTPEPADDEFVTPSTSKKSQKPRSSDATPVSSKPPRYLPRTPLSEQYTSCLSRKMEENFSRMQELMISGHSPHEARQQTIQESSEQLEPRAKVTRSSSQPPPIDTLKPRVPRIESPLVKKTTETPIRRTSYVDTLVATHQIQLQYSDRVVVGVERQMTKLESIKNLAAANRSPIIAEEAKKRRNEAEAVRKLIEVETQNAKKRAVIQELKDRIDKLTQAQLAIHQLVSSQPFSGDPYNQRLLRSIDNWMALPFREFDIQTAREMLELARKMKITIDHFRNVATLHRNSKSLNRSLNTSRKSIAVKINPSSQLNQQSSSDAAPPPSMREASTQMTSRLAESAMTQTSPRRIGVEPLDLSQLLEKHNSSSQTTPPVVEPVLAEVSAEPQRPPVTLSMTAPVSTIAEFDSMLNSISLHNESLETVAEPFSRLKTDISFPSTVEETTPRSGRVSLDSESARRLSAGLSHYLEQVKKERESMEAQESESESMELEIPVVSEVSVTTESENLEEVVSEHSDSKSPETLVASDNGEDSSGGSEDPNATQFEHEIEEHKEPEKLGLIIDPEDEQDETKRFVNHDEFEQSLEEELEPRGNNDSADDSGFLLDNSPAPRLKSIFDNLPPAAASAAVTDTPRVPAEADETTFAGMDMEEYCQREFLKEISPIMVQKAIELQDELRGVDWLTAQDVWQPPSFKDVQMEFDDNFEYFDSFSILIWSAVVDLINKNYLKFGRKMTENEEIAFEAEALKMLQTEHGPESRKSEWCTDVKMSKKLEGMMPMELDYRYDVRRGLPDAEKQKYQWQQVQMTVIAARYANKNLINEANEVYATEKEKLGQMVLESEIDATVTDV</sequence>
<organism evidence="6">
    <name type="scientific">Caenorhabditis elegans</name>
    <dbReference type="NCBI Taxonomy" id="6239"/>
    <lineage>
        <taxon>Eukaryota</taxon>
        <taxon>Metazoa</taxon>
        <taxon>Ecdysozoa</taxon>
        <taxon>Nematoda</taxon>
        <taxon>Chromadorea</taxon>
        <taxon>Rhabditida</taxon>
        <taxon>Rhabditina</taxon>
        <taxon>Rhabditomorpha</taxon>
        <taxon>Rhabditoidea</taxon>
        <taxon>Rhabditidae</taxon>
        <taxon>Peloderinae</taxon>
        <taxon>Caenorhabditis</taxon>
    </lineage>
</organism>
<accession>G5EFV3</accession>
<accession>G5EDA1</accession>
<protein>
    <recommendedName>
        <fullName evidence="7">Regulator of spindle assembly protein 2</fullName>
    </recommendedName>
</protein>
<comment type="function">
    <text evidence="3 4">Recruits rsa-1 and, thereby, phosphatase let-92/paa-1 complex to the centrosomes (PubMed:17218259). Recruits sys-1/beta-catenin to mitotic centrosomes during the first embryonic cell divisions (PubMed:25819561).</text>
</comment>
<comment type="subunit">
    <text evidence="3 4">Interacts with phosphatase regulatory subunit rsa-1 and tpxl-1 (PubMed:17218259). May interact with spd-5 (PubMed:17218259). May interact with sys-1 (PubMed:25819561).</text>
</comment>
<comment type="interaction">
    <interactant intactId="EBI-1187461">
        <id>G5EFV3</id>
    </interactant>
    <interactant intactId="EBI-313130">
        <id>Q9GRZ1</id>
        <label>ebp-1</label>
    </interactant>
    <organismsDiffer>false</organismsDiffer>
    <experiments>4</experiments>
</comment>
<comment type="interaction">
    <interactant intactId="EBI-1187461">
        <id>G5EFV3</id>
    </interactant>
    <interactant intactId="EBI-1187455">
        <id>O02217</id>
        <label>rsa-1</label>
    </interactant>
    <organismsDiffer>false</organismsDiffer>
    <experiments>5</experiments>
</comment>
<comment type="subcellular location">
    <subcellularLocation>
        <location evidence="3 4">Cytoplasm</location>
        <location evidence="3 4">Cytoskeleton</location>
        <location evidence="3 4">Microtubule organizing center</location>
        <location evidence="3 4">Centrosome</location>
    </subcellularLocation>
</comment>
<comment type="disruption phenotype">
    <text evidence="3 4">RNAi-mediated knockdown causes defects in spindle assembly characterized by kinetochore microtubule instability, a reduction in centrosomal microtubules and a decrease in outgrowth of microtubule plus ends from centrosomes (PubMed:17218259). Also causes a reduction of sys-1/beta-catenin enrichment at centrosomes throughout early embryonic cleavages (PubMed:25819561). Increases sys-1 nuclear accumulation without affecting sys-1 asymmetric distribution in E and MS blastomers (PubMed:25819561).</text>
</comment>
<gene>
    <name evidence="7" type="primary">rsa-2</name>
    <name evidence="7" type="ORF">Y48A6B.11</name>
</gene>
<proteinExistence type="evidence at protein level"/>
<dbReference type="EMBL" id="BX284603">
    <property type="protein sequence ID" value="CAA19535.2"/>
    <property type="molecule type" value="Genomic_DNA"/>
</dbReference>
<dbReference type="EMBL" id="BX284603">
    <property type="protein sequence ID" value="CAE11312.1"/>
    <property type="molecule type" value="Genomic_DNA"/>
</dbReference>
<dbReference type="PIR" id="E88594">
    <property type="entry name" value="E88594"/>
</dbReference>
<dbReference type="PIR" id="T26314">
    <property type="entry name" value="T26314"/>
</dbReference>
<dbReference type="RefSeq" id="NP_001022886.1">
    <property type="nucleotide sequence ID" value="NM_001027715.3"/>
</dbReference>
<dbReference type="RefSeq" id="NP_001022887.1">
    <property type="nucleotide sequence ID" value="NM_001027716.1"/>
</dbReference>
<dbReference type="SMR" id="G5EFV3"/>
<dbReference type="ComplexPortal" id="CPX-1357">
    <property type="entry name" value="RSA centrosome-targeting complex"/>
</dbReference>
<dbReference type="FunCoup" id="G5EFV3">
    <property type="interactions" value="1437"/>
</dbReference>
<dbReference type="IntAct" id="G5EFV3">
    <property type="interactions" value="10"/>
</dbReference>
<dbReference type="STRING" id="6239.Y48A6B.11b.1"/>
<dbReference type="PaxDb" id="6239-Y48A6B.11b"/>
<dbReference type="EnsemblMetazoa" id="Y48A6B.11a.1">
    <property type="protein sequence ID" value="Y48A6B.11a.1"/>
    <property type="gene ID" value="WBGene00012972"/>
</dbReference>
<dbReference type="GeneID" id="176536"/>
<dbReference type="KEGG" id="cel:CELE_Y48A6B.11"/>
<dbReference type="AGR" id="WB:WBGene00012972"/>
<dbReference type="CTD" id="176536"/>
<dbReference type="WormBase" id="Y48A6B.11a">
    <property type="protein sequence ID" value="CE24379"/>
    <property type="gene ID" value="WBGene00012972"/>
    <property type="gene designation" value="rsa-2"/>
</dbReference>
<dbReference type="eggNOG" id="ENOG502TGH4">
    <property type="taxonomic scope" value="Eukaryota"/>
</dbReference>
<dbReference type="HOGENOM" id="CLU_310188_0_0_1"/>
<dbReference type="InParanoid" id="G5EFV3"/>
<dbReference type="OMA" id="SDQYFTP"/>
<dbReference type="OrthoDB" id="5826853at2759"/>
<dbReference type="SignaLink" id="G5EFV3"/>
<dbReference type="CD-CODE" id="1E117272">
    <property type="entry name" value="Centrosome"/>
</dbReference>
<dbReference type="PRO" id="PR:G5EFV3"/>
<dbReference type="Proteomes" id="UP000001940">
    <property type="component" value="Chromosome III"/>
</dbReference>
<dbReference type="Bgee" id="WBGene00012972">
    <property type="expression patterns" value="Expressed in germ line (C elegans) and 4 other cell types or tissues"/>
</dbReference>
<dbReference type="GO" id="GO:0005813">
    <property type="term" value="C:centrosome"/>
    <property type="evidence" value="ECO:0000314"/>
    <property type="project" value="WormBase"/>
</dbReference>
<dbReference type="GO" id="GO:0005737">
    <property type="term" value="C:cytoplasm"/>
    <property type="evidence" value="ECO:0007669"/>
    <property type="project" value="UniProtKB-KW"/>
</dbReference>
<dbReference type="GO" id="GO:0000159">
    <property type="term" value="C:protein phosphatase type 2A complex"/>
    <property type="evidence" value="ECO:0000314"/>
    <property type="project" value="ComplexPortal"/>
</dbReference>
<dbReference type="GO" id="GO:0008013">
    <property type="term" value="F:beta-catenin binding"/>
    <property type="evidence" value="ECO:0000353"/>
    <property type="project" value="UniProtKB"/>
</dbReference>
<dbReference type="GO" id="GO:0030674">
    <property type="term" value="F:protein-macromolecule adaptor activity"/>
    <property type="evidence" value="ECO:0000353"/>
    <property type="project" value="WormBase"/>
</dbReference>
<dbReference type="GO" id="GO:0048566">
    <property type="term" value="P:embryonic digestive tract development"/>
    <property type="evidence" value="ECO:0000316"/>
    <property type="project" value="UniProtKB"/>
</dbReference>
<dbReference type="GO" id="GO:0007052">
    <property type="term" value="P:mitotic spindle organization"/>
    <property type="evidence" value="ECO:0000315"/>
    <property type="project" value="WormBase"/>
</dbReference>
<dbReference type="GO" id="GO:0033365">
    <property type="term" value="P:protein localization to organelle"/>
    <property type="evidence" value="ECO:0000315"/>
    <property type="project" value="UniProtKB"/>
</dbReference>
<name>RSA2_CAEEL</name>
<reference evidence="6" key="1">
    <citation type="journal article" date="1998" name="Science">
        <title>Genome sequence of the nematode C. elegans: a platform for investigating biology.</title>
        <authorList>
            <consortium name="The C. elegans sequencing consortium"/>
        </authorList>
    </citation>
    <scope>NUCLEOTIDE SEQUENCE [LARGE SCALE GENOMIC DNA]</scope>
    <source>
        <strain evidence="6">Bristol N2</strain>
    </source>
</reference>
<reference evidence="5" key="2">
    <citation type="journal article" date="2007" name="Cell">
        <title>The C. elegans RSA complex localizes protein phosphatase 2A to centrosomes and regulates mitotic spindle assembly.</title>
        <authorList>
            <person name="Schlaitz A.L."/>
            <person name="Srayko M."/>
            <person name="Dammermann A."/>
            <person name="Quintin S."/>
            <person name="Wielsch N."/>
            <person name="MacLeod I."/>
            <person name="de Robillard Q."/>
            <person name="Zinke A."/>
            <person name="Yates J.R. III"/>
            <person name="Mueller-Reichert T."/>
            <person name="Shevchenko A."/>
            <person name="Oegema K."/>
            <person name="Hyman A.A."/>
        </authorList>
    </citation>
    <scope>FUNCTION</scope>
    <scope>INTERACTION WITH RSA-1; TPXL-1 AND SPD-5</scope>
    <scope>SUBCELLULAR LOCATION</scope>
    <scope>DISRUPTION PHENOTYPE</scope>
</reference>
<reference evidence="5" key="3">
    <citation type="journal article" date="2015" name="Curr. Biol.">
        <title>Centrosome-associated degradation limits beta-catenin inheritance by daughter cells after asymmetric division.</title>
        <authorList>
            <person name="Vora S."/>
            <person name="Phillips B.T."/>
        </authorList>
    </citation>
    <scope>FUNCTION</scope>
    <scope>INTERACTION WITH SYS-1</scope>
    <scope>SUBCELLULAR LOCATION</scope>
    <scope>DISRUPTION PHENOTYPE</scope>
</reference>
<feature type="chain" id="PRO_0000437088" description="Regulator of spindle assembly protein 2" evidence="5">
    <location>
        <begin position="1"/>
        <end position="947"/>
    </location>
</feature>
<feature type="region of interest" description="Disordered" evidence="2">
    <location>
        <begin position="20"/>
        <end position="148"/>
    </location>
</feature>
<feature type="region of interest" description="Disordered" evidence="2">
    <location>
        <begin position="173"/>
        <end position="211"/>
    </location>
</feature>
<feature type="region of interest" description="Disordered" evidence="2">
    <location>
        <begin position="407"/>
        <end position="453"/>
    </location>
</feature>
<feature type="region of interest" description="Disordered" evidence="2">
    <location>
        <begin position="575"/>
        <end position="594"/>
    </location>
</feature>
<feature type="region of interest" description="Disordered" evidence="2">
    <location>
        <begin position="600"/>
        <end position="662"/>
    </location>
</feature>
<feature type="region of interest" description="Disordered" evidence="2">
    <location>
        <begin position="681"/>
        <end position="705"/>
    </location>
</feature>
<feature type="coiled-coil region" evidence="1">
    <location>
        <begin position="276"/>
        <end position="320"/>
    </location>
</feature>
<feature type="coiled-coil region" evidence="1">
    <location>
        <begin position="563"/>
        <end position="591"/>
    </location>
</feature>
<feature type="compositionally biased region" description="Basic and acidic residues" evidence="2">
    <location>
        <begin position="30"/>
        <end position="50"/>
    </location>
</feature>
<feature type="compositionally biased region" description="Basic and acidic residues" evidence="2">
    <location>
        <begin position="62"/>
        <end position="84"/>
    </location>
</feature>
<feature type="compositionally biased region" description="Polar residues" evidence="2">
    <location>
        <begin position="90"/>
        <end position="102"/>
    </location>
</feature>
<feature type="compositionally biased region" description="Polar residues" evidence="2">
    <location>
        <begin position="179"/>
        <end position="188"/>
    </location>
</feature>
<feature type="compositionally biased region" description="Low complexity" evidence="2">
    <location>
        <begin position="411"/>
        <end position="422"/>
    </location>
</feature>
<feature type="compositionally biased region" description="Polar residues" evidence="2">
    <location>
        <begin position="430"/>
        <end position="449"/>
    </location>
</feature>
<feature type="compositionally biased region" description="Acidic residues" evidence="2">
    <location>
        <begin position="580"/>
        <end position="590"/>
    </location>
</feature>
<feature type="compositionally biased region" description="Basic and acidic residues" evidence="2">
    <location>
        <begin position="645"/>
        <end position="657"/>
    </location>
</feature>
<keyword id="KW-0131">Cell cycle</keyword>
<keyword id="KW-0175">Coiled coil</keyword>
<keyword id="KW-0963">Cytoplasm</keyword>
<keyword id="KW-0206">Cytoskeleton</keyword>
<keyword id="KW-1185">Reference proteome</keyword>
<evidence type="ECO:0000255" key="1"/>
<evidence type="ECO:0000256" key="2">
    <source>
        <dbReference type="SAM" id="MobiDB-lite"/>
    </source>
</evidence>
<evidence type="ECO:0000269" key="3">
    <source>
    </source>
</evidence>
<evidence type="ECO:0000269" key="4">
    <source>
    </source>
</evidence>
<evidence type="ECO:0000305" key="5"/>
<evidence type="ECO:0000312" key="6">
    <source>
        <dbReference type="Proteomes" id="UP000001940"/>
    </source>
</evidence>
<evidence type="ECO:0000312" key="7">
    <source>
        <dbReference type="WormBase" id="Y48A6B.11a"/>
    </source>
</evidence>